<keyword id="KW-0342">GTP-binding</keyword>
<keyword id="KW-0378">Hydrolase</keyword>
<keyword id="KW-0456">Lyase</keyword>
<keyword id="KW-0460">Magnesium</keyword>
<keyword id="KW-0464">Manganese</keyword>
<keyword id="KW-0479">Metal-binding</keyword>
<keyword id="KW-0511">Multifunctional enzyme</keyword>
<keyword id="KW-0547">Nucleotide-binding</keyword>
<keyword id="KW-0686">Riboflavin biosynthesis</keyword>
<keyword id="KW-0862">Zinc</keyword>
<gene>
    <name evidence="1" type="primary">ribBA</name>
    <name type="ordered locus">SAS1692</name>
</gene>
<dbReference type="EC" id="4.1.99.12" evidence="1"/>
<dbReference type="EC" id="3.5.4.25" evidence="1"/>
<dbReference type="EMBL" id="BX571857">
    <property type="protein sequence ID" value="CAG43495.1"/>
    <property type="molecule type" value="Genomic_DNA"/>
</dbReference>
<dbReference type="SMR" id="Q6G8G1"/>
<dbReference type="KEGG" id="sas:SAS1692"/>
<dbReference type="HOGENOM" id="CLU_020273_1_2_9"/>
<dbReference type="UniPathway" id="UPA00275">
    <property type="reaction ID" value="UER00399"/>
</dbReference>
<dbReference type="UniPathway" id="UPA00275">
    <property type="reaction ID" value="UER00400"/>
</dbReference>
<dbReference type="GO" id="GO:0005829">
    <property type="term" value="C:cytosol"/>
    <property type="evidence" value="ECO:0007669"/>
    <property type="project" value="TreeGrafter"/>
</dbReference>
<dbReference type="GO" id="GO:0008686">
    <property type="term" value="F:3,4-dihydroxy-2-butanone-4-phosphate synthase activity"/>
    <property type="evidence" value="ECO:0007669"/>
    <property type="project" value="UniProtKB-UniRule"/>
</dbReference>
<dbReference type="GO" id="GO:0005525">
    <property type="term" value="F:GTP binding"/>
    <property type="evidence" value="ECO:0007669"/>
    <property type="project" value="UniProtKB-KW"/>
</dbReference>
<dbReference type="GO" id="GO:0003935">
    <property type="term" value="F:GTP cyclohydrolase II activity"/>
    <property type="evidence" value="ECO:0007669"/>
    <property type="project" value="UniProtKB-UniRule"/>
</dbReference>
<dbReference type="GO" id="GO:0000287">
    <property type="term" value="F:magnesium ion binding"/>
    <property type="evidence" value="ECO:0007669"/>
    <property type="project" value="UniProtKB-UniRule"/>
</dbReference>
<dbReference type="GO" id="GO:0030145">
    <property type="term" value="F:manganese ion binding"/>
    <property type="evidence" value="ECO:0007669"/>
    <property type="project" value="UniProtKB-UniRule"/>
</dbReference>
<dbReference type="GO" id="GO:0008270">
    <property type="term" value="F:zinc ion binding"/>
    <property type="evidence" value="ECO:0007669"/>
    <property type="project" value="UniProtKB-UniRule"/>
</dbReference>
<dbReference type="GO" id="GO:0009231">
    <property type="term" value="P:riboflavin biosynthetic process"/>
    <property type="evidence" value="ECO:0007669"/>
    <property type="project" value="UniProtKB-UniRule"/>
</dbReference>
<dbReference type="CDD" id="cd00641">
    <property type="entry name" value="GTP_cyclohydro2"/>
    <property type="match status" value="1"/>
</dbReference>
<dbReference type="FunFam" id="3.40.50.10990:FF:000002">
    <property type="entry name" value="GTP cyclohydrolase-2"/>
    <property type="match status" value="1"/>
</dbReference>
<dbReference type="FunFam" id="3.90.870.10:FF:000001">
    <property type="entry name" value="Riboflavin biosynthesis protein RibBA"/>
    <property type="match status" value="1"/>
</dbReference>
<dbReference type="Gene3D" id="3.90.870.10">
    <property type="entry name" value="DHBP synthase"/>
    <property type="match status" value="1"/>
</dbReference>
<dbReference type="Gene3D" id="3.40.50.10990">
    <property type="entry name" value="GTP cyclohydrolase II"/>
    <property type="match status" value="1"/>
</dbReference>
<dbReference type="HAMAP" id="MF_00179">
    <property type="entry name" value="RibA"/>
    <property type="match status" value="1"/>
</dbReference>
<dbReference type="HAMAP" id="MF_00180">
    <property type="entry name" value="RibB"/>
    <property type="match status" value="1"/>
</dbReference>
<dbReference type="HAMAP" id="MF_01283">
    <property type="entry name" value="RibBA"/>
    <property type="match status" value="1"/>
</dbReference>
<dbReference type="InterPro" id="IPR017945">
    <property type="entry name" value="DHBP_synth_RibB-like_a/b_dom"/>
</dbReference>
<dbReference type="InterPro" id="IPR000422">
    <property type="entry name" value="DHBP_synthase_RibB"/>
</dbReference>
<dbReference type="InterPro" id="IPR032677">
    <property type="entry name" value="GTP_cyclohydro_II"/>
</dbReference>
<dbReference type="InterPro" id="IPR000926">
    <property type="entry name" value="RibA"/>
</dbReference>
<dbReference type="InterPro" id="IPR036144">
    <property type="entry name" value="RibA-like_sf"/>
</dbReference>
<dbReference type="InterPro" id="IPR016299">
    <property type="entry name" value="Riboflavin_synth_RibBA"/>
</dbReference>
<dbReference type="NCBIfam" id="NF001591">
    <property type="entry name" value="PRK00393.1"/>
    <property type="match status" value="1"/>
</dbReference>
<dbReference type="NCBIfam" id="TIGR00505">
    <property type="entry name" value="ribA"/>
    <property type="match status" value="1"/>
</dbReference>
<dbReference type="NCBIfam" id="TIGR00506">
    <property type="entry name" value="ribB"/>
    <property type="match status" value="1"/>
</dbReference>
<dbReference type="PANTHER" id="PTHR21327:SF18">
    <property type="entry name" value="3,4-DIHYDROXY-2-BUTANONE 4-PHOSPHATE SYNTHASE"/>
    <property type="match status" value="1"/>
</dbReference>
<dbReference type="PANTHER" id="PTHR21327">
    <property type="entry name" value="GTP CYCLOHYDROLASE II-RELATED"/>
    <property type="match status" value="1"/>
</dbReference>
<dbReference type="Pfam" id="PF00926">
    <property type="entry name" value="DHBP_synthase"/>
    <property type="match status" value="1"/>
</dbReference>
<dbReference type="Pfam" id="PF00925">
    <property type="entry name" value="GTP_cyclohydro2"/>
    <property type="match status" value="1"/>
</dbReference>
<dbReference type="PIRSF" id="PIRSF001259">
    <property type="entry name" value="RibA"/>
    <property type="match status" value="1"/>
</dbReference>
<dbReference type="SUPFAM" id="SSF142695">
    <property type="entry name" value="RibA-like"/>
    <property type="match status" value="1"/>
</dbReference>
<dbReference type="SUPFAM" id="SSF55821">
    <property type="entry name" value="YrdC/RibB"/>
    <property type="match status" value="1"/>
</dbReference>
<evidence type="ECO:0000255" key="1">
    <source>
        <dbReference type="HAMAP-Rule" id="MF_01283"/>
    </source>
</evidence>
<reference key="1">
    <citation type="journal article" date="2004" name="Proc. Natl. Acad. Sci. U.S.A.">
        <title>Complete genomes of two clinical Staphylococcus aureus strains: evidence for the rapid evolution of virulence and drug resistance.</title>
        <authorList>
            <person name="Holden M.T.G."/>
            <person name="Feil E.J."/>
            <person name="Lindsay J.A."/>
            <person name="Peacock S.J."/>
            <person name="Day N.P.J."/>
            <person name="Enright M.C."/>
            <person name="Foster T.J."/>
            <person name="Moore C.E."/>
            <person name="Hurst L."/>
            <person name="Atkin R."/>
            <person name="Barron A."/>
            <person name="Bason N."/>
            <person name="Bentley S.D."/>
            <person name="Chillingworth C."/>
            <person name="Chillingworth T."/>
            <person name="Churcher C."/>
            <person name="Clark L."/>
            <person name="Corton C."/>
            <person name="Cronin A."/>
            <person name="Doggett J."/>
            <person name="Dowd L."/>
            <person name="Feltwell T."/>
            <person name="Hance Z."/>
            <person name="Harris B."/>
            <person name="Hauser H."/>
            <person name="Holroyd S."/>
            <person name="Jagels K."/>
            <person name="James K.D."/>
            <person name="Lennard N."/>
            <person name="Line A."/>
            <person name="Mayes R."/>
            <person name="Moule S."/>
            <person name="Mungall K."/>
            <person name="Ormond D."/>
            <person name="Quail M.A."/>
            <person name="Rabbinowitsch E."/>
            <person name="Rutherford K.M."/>
            <person name="Sanders M."/>
            <person name="Sharp S."/>
            <person name="Simmonds M."/>
            <person name="Stevens K."/>
            <person name="Whitehead S."/>
            <person name="Barrell B.G."/>
            <person name="Spratt B.G."/>
            <person name="Parkhill J."/>
        </authorList>
    </citation>
    <scope>NUCLEOTIDE SEQUENCE [LARGE SCALE GENOMIC DNA]</scope>
    <source>
        <strain>MSSA476</strain>
    </source>
</reference>
<organism>
    <name type="scientific">Staphylococcus aureus (strain MSSA476)</name>
    <dbReference type="NCBI Taxonomy" id="282459"/>
    <lineage>
        <taxon>Bacteria</taxon>
        <taxon>Bacillati</taxon>
        <taxon>Bacillota</taxon>
        <taxon>Bacilli</taxon>
        <taxon>Bacillales</taxon>
        <taxon>Staphylococcaceae</taxon>
        <taxon>Staphylococcus</taxon>
    </lineage>
</organism>
<protein>
    <recommendedName>
        <fullName evidence="1">Riboflavin biosynthesis protein RibBA</fullName>
    </recommendedName>
    <domain>
        <recommendedName>
            <fullName evidence="1">3,4-dihydroxy-2-butanone 4-phosphate synthase</fullName>
            <shortName evidence="1">DHBP synthase</shortName>
            <ecNumber evidence="1">4.1.99.12</ecNumber>
        </recommendedName>
    </domain>
    <domain>
        <recommendedName>
            <fullName evidence="1">GTP cyclohydrolase-2</fullName>
            <ecNumber evidence="1">3.5.4.25</ecNumber>
        </recommendedName>
        <alternativeName>
            <fullName evidence="1">GTP cyclohydrolase II</fullName>
        </alternativeName>
    </domain>
</protein>
<proteinExistence type="inferred from homology"/>
<accession>Q6G8G1</accession>
<sequence>MQFDNIDSALMALKNGETIIVVDDENRENEGDLVAVTEWMNDNTINFMAKEARGLICAPVSKDIAQRLDLVQMVDDNSDIFGTQFTVSIDHVDTTTGISAYERTLTAKKLIDPSSEAKDFNRPGHLFPLVAQDKGVLARNGHTEAAVDLAKLTGAKPAGVICEIMNDDGTMAKGQDLQKFKEKHQLKMITIDDLIEYRKKLEPEIEFKAKVKMPTDFGTFDMYGFKATYTDEEIVVLTKGAIRQHENVRLHSACLTGDIFHSQRCDCGAQLESSMKYINEHGGMIIYLPQEGRGIGLLNKLRAYELIEQGYDTVTANLALGFDEDLRDYHIAAQILKYFNIEHINLLSNNPSKFEGLKQYGIDIAERIEVIVPETVHNHDYMETKKIKMGHLI</sequence>
<feature type="chain" id="PRO_0000151737" description="Riboflavin biosynthesis protein RibBA">
    <location>
        <begin position="1"/>
        <end position="393"/>
    </location>
</feature>
<feature type="region of interest" description="DHBP synthase">
    <location>
        <begin position="1"/>
        <end position="200"/>
    </location>
</feature>
<feature type="region of interest" description="GTP cyclohydrolase II">
    <location>
        <begin position="201"/>
        <end position="393"/>
    </location>
</feature>
<feature type="active site" description="Proton acceptor; for GTP cyclohydrolase activity" evidence="1">
    <location>
        <position position="325"/>
    </location>
</feature>
<feature type="active site" description="Nucleophile; for GTP cyclohydrolase activity" evidence="1">
    <location>
        <position position="327"/>
    </location>
</feature>
<feature type="binding site" evidence="1">
    <location>
        <begin position="27"/>
        <end position="28"/>
    </location>
    <ligand>
        <name>D-ribulose 5-phosphate</name>
        <dbReference type="ChEBI" id="CHEBI:58121"/>
    </ligand>
</feature>
<feature type="binding site" evidence="1">
    <location>
        <position position="28"/>
    </location>
    <ligand>
        <name>Mg(2+)</name>
        <dbReference type="ChEBI" id="CHEBI:18420"/>
        <label>1</label>
    </ligand>
</feature>
<feature type="binding site" evidence="1">
    <location>
        <position position="28"/>
    </location>
    <ligand>
        <name>Mg(2+)</name>
        <dbReference type="ChEBI" id="CHEBI:18420"/>
        <label>2</label>
    </ligand>
</feature>
<feature type="binding site" evidence="1">
    <location>
        <position position="32"/>
    </location>
    <ligand>
        <name>D-ribulose 5-phosphate</name>
        <dbReference type="ChEBI" id="CHEBI:58121"/>
    </ligand>
</feature>
<feature type="binding site" evidence="1">
    <location>
        <begin position="139"/>
        <end position="143"/>
    </location>
    <ligand>
        <name>D-ribulose 5-phosphate</name>
        <dbReference type="ChEBI" id="CHEBI:58121"/>
    </ligand>
</feature>
<feature type="binding site" evidence="1">
    <location>
        <position position="142"/>
    </location>
    <ligand>
        <name>Mg(2+)</name>
        <dbReference type="ChEBI" id="CHEBI:18420"/>
        <label>2</label>
    </ligand>
</feature>
<feature type="binding site" evidence="1">
    <location>
        <position position="163"/>
    </location>
    <ligand>
        <name>D-ribulose 5-phosphate</name>
        <dbReference type="ChEBI" id="CHEBI:58121"/>
    </ligand>
</feature>
<feature type="binding site" evidence="1">
    <location>
        <begin position="249"/>
        <end position="253"/>
    </location>
    <ligand>
        <name>GTP</name>
        <dbReference type="ChEBI" id="CHEBI:37565"/>
    </ligand>
</feature>
<feature type="binding site" evidence="1">
    <location>
        <position position="254"/>
    </location>
    <ligand>
        <name>Zn(2+)</name>
        <dbReference type="ChEBI" id="CHEBI:29105"/>
        <note>catalytic</note>
    </ligand>
</feature>
<feature type="binding site" evidence="1">
    <location>
        <position position="265"/>
    </location>
    <ligand>
        <name>Zn(2+)</name>
        <dbReference type="ChEBI" id="CHEBI:29105"/>
        <note>catalytic</note>
    </ligand>
</feature>
<feature type="binding site" evidence="1">
    <location>
        <position position="267"/>
    </location>
    <ligand>
        <name>Zn(2+)</name>
        <dbReference type="ChEBI" id="CHEBI:29105"/>
        <note>catalytic</note>
    </ligand>
</feature>
<feature type="binding site" evidence="1">
    <location>
        <position position="270"/>
    </location>
    <ligand>
        <name>GTP</name>
        <dbReference type="ChEBI" id="CHEBI:37565"/>
    </ligand>
</feature>
<feature type="binding site" evidence="1">
    <location>
        <begin position="291"/>
        <end position="293"/>
    </location>
    <ligand>
        <name>GTP</name>
        <dbReference type="ChEBI" id="CHEBI:37565"/>
    </ligand>
</feature>
<feature type="binding site" evidence="1">
    <location>
        <position position="313"/>
    </location>
    <ligand>
        <name>GTP</name>
        <dbReference type="ChEBI" id="CHEBI:37565"/>
    </ligand>
</feature>
<feature type="binding site" evidence="1">
    <location>
        <position position="348"/>
    </location>
    <ligand>
        <name>GTP</name>
        <dbReference type="ChEBI" id="CHEBI:37565"/>
    </ligand>
</feature>
<feature type="binding site" evidence="1">
    <location>
        <position position="353"/>
    </location>
    <ligand>
        <name>GTP</name>
        <dbReference type="ChEBI" id="CHEBI:37565"/>
    </ligand>
</feature>
<feature type="site" description="Essential for DHBP synthase activity" evidence="1">
    <location>
        <position position="125"/>
    </location>
</feature>
<feature type="site" description="Essential for DHBP synthase activity" evidence="1">
    <location>
        <position position="163"/>
    </location>
</feature>
<comment type="function">
    <text evidence="1">Catalyzes the conversion of D-ribulose 5-phosphate to formate and 3,4-dihydroxy-2-butanone 4-phosphate.</text>
</comment>
<comment type="function">
    <text evidence="1">Catalyzes the conversion of GTP to 2,5-diamino-6-ribosylamino-4(3H)-pyrimidinone 5'-phosphate (DARP), formate and pyrophosphate.</text>
</comment>
<comment type="catalytic activity">
    <reaction evidence="1">
        <text>D-ribulose 5-phosphate = (2S)-2-hydroxy-3-oxobutyl phosphate + formate + H(+)</text>
        <dbReference type="Rhea" id="RHEA:18457"/>
        <dbReference type="ChEBI" id="CHEBI:15378"/>
        <dbReference type="ChEBI" id="CHEBI:15740"/>
        <dbReference type="ChEBI" id="CHEBI:58121"/>
        <dbReference type="ChEBI" id="CHEBI:58830"/>
        <dbReference type="EC" id="4.1.99.12"/>
    </reaction>
</comment>
<comment type="catalytic activity">
    <reaction evidence="1">
        <text>GTP + 4 H2O = 2,5-diamino-6-hydroxy-4-(5-phosphoribosylamino)-pyrimidine + formate + 2 phosphate + 3 H(+)</text>
        <dbReference type="Rhea" id="RHEA:23704"/>
        <dbReference type="ChEBI" id="CHEBI:15377"/>
        <dbReference type="ChEBI" id="CHEBI:15378"/>
        <dbReference type="ChEBI" id="CHEBI:15740"/>
        <dbReference type="ChEBI" id="CHEBI:37565"/>
        <dbReference type="ChEBI" id="CHEBI:43474"/>
        <dbReference type="ChEBI" id="CHEBI:58614"/>
        <dbReference type="EC" id="3.5.4.25"/>
    </reaction>
</comment>
<comment type="cofactor">
    <cofactor evidence="1">
        <name>Mg(2+)</name>
        <dbReference type="ChEBI" id="CHEBI:18420"/>
    </cofactor>
    <cofactor evidence="1">
        <name>Mn(2+)</name>
        <dbReference type="ChEBI" id="CHEBI:29035"/>
    </cofactor>
    <text evidence="1">Binds 2 divalent metal cations per subunit. Magnesium or manganese.</text>
</comment>
<comment type="cofactor">
    <cofactor evidence="1">
        <name>Zn(2+)</name>
        <dbReference type="ChEBI" id="CHEBI:29105"/>
    </cofactor>
    <text evidence="1">Binds 1 zinc ion per subunit.</text>
</comment>
<comment type="pathway">
    <text evidence="1">Cofactor biosynthesis; riboflavin biosynthesis; 2-hydroxy-3-oxobutyl phosphate from D-ribulose 5-phosphate: step 1/1.</text>
</comment>
<comment type="pathway">
    <text evidence="1">Cofactor biosynthesis; riboflavin biosynthesis; 5-amino-6-(D-ribitylamino)uracil from GTP: step 1/4.</text>
</comment>
<comment type="similarity">
    <text evidence="1">In the N-terminal section; belongs to the DHBP synthase family.</text>
</comment>
<comment type="similarity">
    <text evidence="1">In the C-terminal section; belongs to the GTP cyclohydrolase II family.</text>
</comment>
<name>RIBBA_STAAS</name>